<feature type="chain" id="PRO_0000368211" description="PH domain-containing rcdII">
    <location>
        <begin position="1"/>
        <end position="464"/>
    </location>
</feature>
<feature type="domain" description="PH">
    <location>
        <begin position="353"/>
        <end position="461"/>
    </location>
</feature>
<feature type="region of interest" description="Disordered" evidence="2">
    <location>
        <begin position="215"/>
        <end position="290"/>
    </location>
</feature>
<feature type="region of interest" description="Disordered" evidence="2">
    <location>
        <begin position="317"/>
        <end position="347"/>
    </location>
</feature>
<feature type="coiled-coil region" evidence="1">
    <location>
        <begin position="8"/>
        <end position="210"/>
    </location>
</feature>
<feature type="compositionally biased region" description="Low complexity" evidence="2">
    <location>
        <begin position="234"/>
        <end position="288"/>
    </location>
</feature>
<feature type="compositionally biased region" description="Low complexity" evidence="2">
    <location>
        <begin position="317"/>
        <end position="328"/>
    </location>
</feature>
<feature type="compositionally biased region" description="Low complexity" evidence="2">
    <location>
        <begin position="338"/>
        <end position="347"/>
    </location>
</feature>
<keyword id="KW-0175">Coiled coil</keyword>
<keyword id="KW-1185">Reference proteome</keyword>
<accession>Q54Q72</accession>
<accession>Q94477</accession>
<gene>
    <name type="primary">rcdII</name>
    <name type="synonym">veg158</name>
    <name type="ORF">DDB_G0284041</name>
</gene>
<name>RDCII_DICDI</name>
<dbReference type="EMBL" id="AAFI02000063">
    <property type="protein sequence ID" value="EAL65361.1"/>
    <property type="molecule type" value="Genomic_DNA"/>
</dbReference>
<dbReference type="EMBL" id="U66524">
    <property type="protein sequence ID" value="AAB06787.1"/>
    <property type="molecule type" value="mRNA"/>
</dbReference>
<dbReference type="RefSeq" id="XP_638725.1">
    <property type="nucleotide sequence ID" value="XM_633633.1"/>
</dbReference>
<dbReference type="SMR" id="Q54Q72"/>
<dbReference type="FunCoup" id="Q54Q72">
    <property type="interactions" value="362"/>
</dbReference>
<dbReference type="STRING" id="44689.Q54Q72"/>
<dbReference type="PaxDb" id="44689-DDB0191477"/>
<dbReference type="EnsemblProtists" id="EAL65361">
    <property type="protein sequence ID" value="EAL65361"/>
    <property type="gene ID" value="DDB_G0284041"/>
</dbReference>
<dbReference type="GeneID" id="8624395"/>
<dbReference type="KEGG" id="ddi:DDB_G0284041"/>
<dbReference type="dictyBase" id="DDB_G0284041">
    <property type="gene designation" value="rcdII"/>
</dbReference>
<dbReference type="VEuPathDB" id="AmoebaDB:DDB_G0284041"/>
<dbReference type="eggNOG" id="KOG2129">
    <property type="taxonomic scope" value="Eukaryota"/>
</dbReference>
<dbReference type="HOGENOM" id="CLU_589783_0_0_1"/>
<dbReference type="InParanoid" id="Q54Q72"/>
<dbReference type="OMA" id="TNKFMKY"/>
<dbReference type="PRO" id="PR:Q54Q72"/>
<dbReference type="Proteomes" id="UP000002195">
    <property type="component" value="Chromosome 4"/>
</dbReference>
<dbReference type="GO" id="GO:0016020">
    <property type="term" value="C:membrane"/>
    <property type="evidence" value="ECO:0007669"/>
    <property type="project" value="InterPro"/>
</dbReference>
<dbReference type="Gene3D" id="2.30.29.30">
    <property type="entry name" value="Pleckstrin-homology domain (PH domain)/Phosphotyrosine-binding domain (PTB)"/>
    <property type="match status" value="1"/>
</dbReference>
<dbReference type="InterPro" id="IPR019152">
    <property type="entry name" value="DUF2046"/>
</dbReference>
<dbReference type="InterPro" id="IPR011993">
    <property type="entry name" value="PH-like_dom_sf"/>
</dbReference>
<dbReference type="InterPro" id="IPR001849">
    <property type="entry name" value="PH_domain"/>
</dbReference>
<dbReference type="InterPro" id="IPR012404">
    <property type="entry name" value="UCP036436"/>
</dbReference>
<dbReference type="PANTHER" id="PTHR15276:SF0">
    <property type="entry name" value="COILED-COIL DOMAIN-CONTAINING PROTEIN 6"/>
    <property type="match status" value="1"/>
</dbReference>
<dbReference type="PANTHER" id="PTHR15276">
    <property type="entry name" value="H4 D10S170 PROTEIN-RELATED"/>
    <property type="match status" value="1"/>
</dbReference>
<dbReference type="Pfam" id="PF09755">
    <property type="entry name" value="DUF2046"/>
    <property type="match status" value="1"/>
</dbReference>
<dbReference type="Pfam" id="PF00169">
    <property type="entry name" value="PH"/>
    <property type="match status" value="1"/>
</dbReference>
<dbReference type="PIRSF" id="PIRSF036436">
    <property type="entry name" value="UCP036436"/>
    <property type="match status" value="1"/>
</dbReference>
<dbReference type="SMART" id="SM00233">
    <property type="entry name" value="PH"/>
    <property type="match status" value="1"/>
</dbReference>
<dbReference type="SUPFAM" id="SSF50729">
    <property type="entry name" value="PH domain-like"/>
    <property type="match status" value="1"/>
</dbReference>
<proteinExistence type="evidence at transcript level"/>
<reference key="1">
    <citation type="journal article" date="2005" name="Nature">
        <title>The genome of the social amoeba Dictyostelium discoideum.</title>
        <authorList>
            <person name="Eichinger L."/>
            <person name="Pachebat J.A."/>
            <person name="Gloeckner G."/>
            <person name="Rajandream M.A."/>
            <person name="Sucgang R."/>
            <person name="Berriman M."/>
            <person name="Song J."/>
            <person name="Olsen R."/>
            <person name="Szafranski K."/>
            <person name="Xu Q."/>
            <person name="Tunggal B."/>
            <person name="Kummerfeld S."/>
            <person name="Madera M."/>
            <person name="Konfortov B.A."/>
            <person name="Rivero F."/>
            <person name="Bankier A.T."/>
            <person name="Lehmann R."/>
            <person name="Hamlin N."/>
            <person name="Davies R."/>
            <person name="Gaudet P."/>
            <person name="Fey P."/>
            <person name="Pilcher K."/>
            <person name="Chen G."/>
            <person name="Saunders D."/>
            <person name="Sodergren E.J."/>
            <person name="Davis P."/>
            <person name="Kerhornou A."/>
            <person name="Nie X."/>
            <person name="Hall N."/>
            <person name="Anjard C."/>
            <person name="Hemphill L."/>
            <person name="Bason N."/>
            <person name="Farbrother P."/>
            <person name="Desany B."/>
            <person name="Just E."/>
            <person name="Morio T."/>
            <person name="Rost R."/>
            <person name="Churcher C.M."/>
            <person name="Cooper J."/>
            <person name="Haydock S."/>
            <person name="van Driessche N."/>
            <person name="Cronin A."/>
            <person name="Goodhead I."/>
            <person name="Muzny D.M."/>
            <person name="Mourier T."/>
            <person name="Pain A."/>
            <person name="Lu M."/>
            <person name="Harper D."/>
            <person name="Lindsay R."/>
            <person name="Hauser H."/>
            <person name="James K.D."/>
            <person name="Quiles M."/>
            <person name="Madan Babu M."/>
            <person name="Saito T."/>
            <person name="Buchrieser C."/>
            <person name="Wardroper A."/>
            <person name="Felder M."/>
            <person name="Thangavelu M."/>
            <person name="Johnson D."/>
            <person name="Knights A."/>
            <person name="Loulseged H."/>
            <person name="Mungall K.L."/>
            <person name="Oliver K."/>
            <person name="Price C."/>
            <person name="Quail M.A."/>
            <person name="Urushihara H."/>
            <person name="Hernandez J."/>
            <person name="Rabbinowitsch E."/>
            <person name="Steffen D."/>
            <person name="Sanders M."/>
            <person name="Ma J."/>
            <person name="Kohara Y."/>
            <person name="Sharp S."/>
            <person name="Simmonds M.N."/>
            <person name="Spiegler S."/>
            <person name="Tivey A."/>
            <person name="Sugano S."/>
            <person name="White B."/>
            <person name="Walker D."/>
            <person name="Woodward J.R."/>
            <person name="Winckler T."/>
            <person name="Tanaka Y."/>
            <person name="Shaulsky G."/>
            <person name="Schleicher M."/>
            <person name="Weinstock G.M."/>
            <person name="Rosenthal A."/>
            <person name="Cox E.C."/>
            <person name="Chisholm R.L."/>
            <person name="Gibbs R.A."/>
            <person name="Loomis W.F."/>
            <person name="Platzer M."/>
            <person name="Kay R.R."/>
            <person name="Williams J.G."/>
            <person name="Dear P.H."/>
            <person name="Noegel A.A."/>
            <person name="Barrell B.G."/>
            <person name="Kuspa A."/>
        </authorList>
    </citation>
    <scope>NUCLEOTIDE SEQUENCE [LARGE SCALE GENOMIC DNA]</scope>
    <source>
        <strain>AX4</strain>
    </source>
</reference>
<reference key="2">
    <citation type="submission" date="1996-08" db="EMBL/GenBank/DDBJ databases">
        <authorList>
            <person name="Loomis W.F."/>
        </authorList>
    </citation>
    <scope>NUCLEOTIDE SEQUENCE [MRNA] OF 180-464</scope>
    <source>
        <strain>AX4</strain>
    </source>
</reference>
<protein>
    <recommendedName>
        <fullName>PH domain-containing rcdII</fullName>
    </recommendedName>
</protein>
<sequence length="464" mass="52376">MDSNAAEKSSKEIIEDLQRQLLTEKNRNRTLVEELKQLRDSHARIQIVTENEEEYITNKFMKYLNQLKKEKEELALKVEQEEEYLTNTLQKKMLTIMKEKVDLENQLEQEEEFIVNKLQKQIQDVMKDKKALEKRLENEINDHRSLLKLQDEVIVLRDKIKELESNGNKKEDIDALKAENFVLGQKIIREQEKLSKVNSENTKLMSNLEIDDERNFNNKSKRNRSISFPTSMASTTTTTTTSITSSTTSITSSTSSINSSGSSSTNNTCNNNSSSNIPTSPLSCSSNSSGGGGGSGSLNNSCNSNCSNSSNSSNNNCNNNNNNNNGNSKLSTGVPITRSRSSSSNSNPCLITKIVKEGWLKRKSISSSNQETLEKRYYEISTDGEMREYFDETKQIPTSQYINLDTCFQIDIVTDNPNHPGYSDIKLYIKTNSISPVEIITFSTSSNDCNDWKDTISSLMPLKR</sequence>
<organism>
    <name type="scientific">Dictyostelium discoideum</name>
    <name type="common">Social amoeba</name>
    <dbReference type="NCBI Taxonomy" id="44689"/>
    <lineage>
        <taxon>Eukaryota</taxon>
        <taxon>Amoebozoa</taxon>
        <taxon>Evosea</taxon>
        <taxon>Eumycetozoa</taxon>
        <taxon>Dictyostelia</taxon>
        <taxon>Dictyosteliales</taxon>
        <taxon>Dictyosteliaceae</taxon>
        <taxon>Dictyostelium</taxon>
    </lineage>
</organism>
<evidence type="ECO:0000255" key="1"/>
<evidence type="ECO:0000256" key="2">
    <source>
        <dbReference type="SAM" id="MobiDB-lite"/>
    </source>
</evidence>